<sequence>MALFTPWKLSSQKLGFFLVTFGFIWGMMLLHFTIQQRTQPESSSMLREQILDLSKRYIKALAEENRNVVDGPYAGVMTAYDLKKTLAVLLDNILQRIGKLESKVDNLVVNGTGTNSTNSTTAVPSLVALEKINVADIINGAQEKCVLPPMDGYPHCEGKIKWMKDMWRSDPCYADYGVDGSTCSFFIYLSEVENWCPHLPWRAKNPYEEADHNSLAEIRTDFNILYSMMKKHEEFRWMRLRIRRMADAWIQAIKSLAEKQNLEKRKRKKVLVHLGLLTKESGFKIAETAFSGGPLGELVQWSDLITSLYLLGHDIRISASLAELKEIMKKVVGNRSGCPTVGDRIVELIYIDIVGLAQFKKTLGPSWVHYQCMLRVLDSFGTEPEFNHANYAQSKGHKTPWGKWNLNPQQFYTMFPHTPDNSFLGFVVEQHLNSSDIHHINEIKRQNQSLVYGKVDSFWKNKKIYLDIIHTYMEVHATVYGSSTKNIPSYVKNHGILSGRDLQFLLRETKLFVGLGFPYEGPAPLEAIANGCAFLNPKFNPPKSSKNTDFFIGKPTLRELTSQHPYAEVFIGRPHVWTVDLNNQEEVEDAVKAILNQKIEPYMPYEFTCEGMLQRINAFIEKQDFCHGQVMWPPLSALQVKLAEPGQSCKQVCQESQLICEPSFFQHLNKDKDMLKYKVTCQSSELAKDILVPSFDPKNKHCVFQGDLLLFSCAGAHPRHQRVCPCRDFIKGQVALCKDCL</sequence>
<reference key="1">
    <citation type="journal article" date="1994" name="Biochem. Biophys. Res. Commun.">
        <title>cDNA cloning and chromosomal mapping of human N-acetylglucosaminyltransferase V+.</title>
        <authorList>
            <person name="Nishikawa A."/>
            <person name="Saito H."/>
            <person name="Gu J."/>
            <person name="Ihara Y."/>
            <person name="Soejima H."/>
            <person name="Wada Y."/>
            <person name="Sekiya C."/>
            <person name="Kangawa K."/>
            <person name="Niikawa N."/>
            <person name="Taniguchi N."/>
        </authorList>
    </citation>
    <scope>NUCLEOTIDE SEQUENCE [MRNA]</scope>
    <source>
        <tissue>Liver</tissue>
    </source>
</reference>
<reference key="2">
    <citation type="journal article" date="1999" name="Arch. Biochem. Biophys.">
        <title>Characterization of UDP-N-acetylglucosamine: alpha-6-d-mannoside beta-1,6-N-acetylglucosaminyltransferase V from a human hepatoma cell line Hep3B.</title>
        <authorList>
            <person name="Park C."/>
            <person name="Jin U.H."/>
            <person name="Lee Y.C."/>
            <person name="Cho T.J."/>
            <person name="Kim C.H."/>
        </authorList>
    </citation>
    <scope>NUCLEOTIDE SEQUENCE [MRNA]</scope>
    <scope>CATALYTIC ACTIVITY</scope>
    <scope>FUNCTION</scope>
    <scope>ACTIVITY REGULATION</scope>
    <scope>BIOPHYSICOCHEMICAL PROPERTIES</scope>
    <scope>PATHWAY</scope>
    <scope>GLYCOSYLATION</scope>
</reference>
<reference key="3">
    <citation type="submission" date="2005-09" db="EMBL/GenBank/DDBJ databases">
        <authorList>
            <person name="Mural R.J."/>
            <person name="Istrail S."/>
            <person name="Sutton G.G."/>
            <person name="Florea L."/>
            <person name="Halpern A.L."/>
            <person name="Mobarry C.M."/>
            <person name="Lippert R."/>
            <person name="Walenz B."/>
            <person name="Shatkay H."/>
            <person name="Dew I."/>
            <person name="Miller J.R."/>
            <person name="Flanigan M.J."/>
            <person name="Edwards N.J."/>
            <person name="Bolanos R."/>
            <person name="Fasulo D."/>
            <person name="Halldorsson B.V."/>
            <person name="Hannenhalli S."/>
            <person name="Turner R."/>
            <person name="Yooseph S."/>
            <person name="Lu F."/>
            <person name="Nusskern D.R."/>
            <person name="Shue B.C."/>
            <person name="Zheng X.H."/>
            <person name="Zhong F."/>
            <person name="Delcher A.L."/>
            <person name="Huson D.H."/>
            <person name="Kravitz S.A."/>
            <person name="Mouchard L."/>
            <person name="Reinert K."/>
            <person name="Remington K.A."/>
            <person name="Clark A.G."/>
            <person name="Waterman M.S."/>
            <person name="Eichler E.E."/>
            <person name="Adams M.D."/>
            <person name="Hunkapiller M.W."/>
            <person name="Myers E.W."/>
            <person name="Venter J.C."/>
        </authorList>
    </citation>
    <scope>NUCLEOTIDE SEQUENCE [LARGE SCALE GENOMIC DNA]</scope>
</reference>
<reference key="4">
    <citation type="journal article" date="2002" name="J. Biol. Chem.">
        <title>A secreted type of beta 1,6-N-acetylglucosaminyltransferase V (GnT-V) induces tumor angiogenesis without mediation of glycosylation: a novel function of GnT-V distinct from the original glycosyltransferase activity.</title>
        <authorList>
            <person name="Saito T."/>
            <person name="Miyoshi E."/>
            <person name="Sasai K."/>
            <person name="Nakano N."/>
            <person name="Eguchi H."/>
            <person name="Honke K."/>
            <person name="Taniguchi N."/>
        </authorList>
    </citation>
    <scope>FUNCTION (SECRETED ALPHA-1,6-MANNOSYLGLYCOPROTEIN 6-BETA-N-ACETYLGLUCOSAMINYLTRANSFERASE A)</scope>
</reference>
<reference key="5">
    <citation type="journal article" date="2006" name="FASEB J.">
        <title>A secreted type of beta1,6 N-acetylglucosaminyltransferase V (GnT-V), a novel angiogenesis inducer, is regulated by gamma-secretase.</title>
        <authorList>
            <person name="Nakahara S."/>
            <person name="Saito T."/>
            <person name="Kondo N."/>
            <person name="Moriwaki K."/>
            <person name="Noda K."/>
            <person name="Ihara S."/>
            <person name="Takahashi M."/>
            <person name="Ide Y."/>
            <person name="Gu J."/>
            <person name="Inohara H."/>
            <person name="Katayama T."/>
            <person name="Tohyama M."/>
            <person name="Kubo T."/>
            <person name="Taniguchi N."/>
            <person name="Miyoshi E."/>
        </authorList>
    </citation>
    <scope>PROTEIN SEQUENCE OF 31-35 (SECRETED ALPHA-1,6-MANNOSYLGLYCOPROTEIN 6-BETA-N-ACETYLGLUCOSAMINYLTRANSFERASE A)</scope>
    <scope>FUNCTION</scope>
    <scope>CATALYTIC ACTIVITY</scope>
    <scope>PATHWAY</scope>
    <scope>SUBCELLULAR LOCATION</scope>
    <scope>TOPOLOGY</scope>
    <scope>GLYCOSYLATION</scope>
    <scope>MUTAGENESIS OF LEU-29; LEU-30 AND HIS-31</scope>
</reference>
<reference key="6">
    <citation type="journal article" date="2012" name="Int. J. Oncol.">
        <title>N-acetylglucosaminyltransferase V negatively regulates integrin alpha5beta1-mediated monocyte adhesion and transmigration through vascular endothelium.</title>
        <authorList>
            <person name="Yang H.M."/>
            <person name="Yu C."/>
            <person name="Yang Z."/>
        </authorList>
    </citation>
    <scope>FUNCTION</scope>
    <scope>INDUCTION BY IFNG</scope>
</reference>
<reference evidence="14 15" key="7">
    <citation type="journal article" date="2018" name="Nat. Commun.">
        <title>Structure and mechanism of cancer-associated N-acetylglucosaminyltransferase-V.</title>
        <authorList>
            <person name="Nagae M."/>
            <person name="Kizuka Y."/>
            <person name="Mihara E."/>
            <person name="Kitago Y."/>
            <person name="Hanashima S."/>
            <person name="Ito Y."/>
            <person name="Takagi J."/>
            <person name="Taniguchi N."/>
            <person name="Yamaguchi Y."/>
        </authorList>
    </citation>
    <scope>X-RAY CRYSTALLOGRAPHY (1.90 ANGSTROMS) OF 121-741</scope>
    <scope>FUNCTION</scope>
    <scope>CATALYTIC ACTIVITY</scope>
    <scope>BIOPHYSICOCHEMICAL PROPERTIES</scope>
    <scope>PATHWAY</scope>
    <scope>GLYCOSYLATION AT ASN-433</scope>
    <scope>DISULFIDE BONDS</scope>
    <scope>MUTAGENESIS OF GLU-280; GLU-287; GLU-297; GLU-429; GLU-520 AND GLU-526</scope>
</reference>
<feature type="chain" id="PRO_0000080522" description="Alpha-1,6-mannosylglycoprotein 6-beta-N-acetylglucosaminyltransferase A">
    <location>
        <begin position="1"/>
        <end position="741"/>
    </location>
</feature>
<feature type="chain" id="PRO_0000445692" description="Secreted alpha-1,6-mannosylglycoprotein 6-beta-N-acetylglucosaminyltransferase A" evidence="11">
    <location>
        <begin position="31"/>
        <end position="741"/>
    </location>
</feature>
<feature type="topological domain" description="Cytoplasmic" evidence="3">
    <location>
        <begin position="1"/>
        <end position="13"/>
    </location>
</feature>
<feature type="transmembrane region" description="Helical; Signal-anchor for type II membrane protein" evidence="3">
    <location>
        <begin position="14"/>
        <end position="30"/>
    </location>
</feature>
<feature type="topological domain" description="Lumenal" evidence="12">
    <location>
        <begin position="31"/>
        <end position="741"/>
    </location>
</feature>
<feature type="region of interest" description="Sufficient for catalytic activity" evidence="8">
    <location>
        <begin position="213"/>
        <end position="741"/>
    </location>
</feature>
<feature type="region of interest" description="Important for activity in FGF2 release" evidence="5">
    <location>
        <begin position="264"/>
        <end position="269"/>
    </location>
</feature>
<feature type="binding site" evidence="8">
    <location>
        <begin position="378"/>
        <end position="379"/>
    </location>
    <ligand>
        <name>substrate</name>
    </ligand>
</feature>
<feature type="binding site" evidence="13">
    <location>
        <position position="526"/>
    </location>
    <ligand>
        <name>UDP-N-acetyl-alpha-D-glucosamine</name>
        <dbReference type="ChEBI" id="CHEBI:57705"/>
    </ligand>
</feature>
<feature type="binding site" evidence="8">
    <location>
        <position position="554"/>
    </location>
    <ligand>
        <name>substrate</name>
    </ligand>
</feature>
<feature type="glycosylation site" description="N-linked (GlcNAc...) asparagine" evidence="3">
    <location>
        <position position="110"/>
    </location>
</feature>
<feature type="glycosylation site" description="N-linked (GlcNAc...) asparagine" evidence="3">
    <location>
        <position position="115"/>
    </location>
</feature>
<feature type="glycosylation site" description="N-linked (GlcNAc...) asparagine" evidence="3">
    <location>
        <position position="118"/>
    </location>
</feature>
<feature type="glycosylation site" description="N-linked (GlcNAc...) asparagine" evidence="3">
    <location>
        <position position="334"/>
    </location>
</feature>
<feature type="glycosylation site" description="N-linked (GlcNAc...) asparagine" evidence="8 14">
    <location>
        <position position="433"/>
    </location>
</feature>
<feature type="glycosylation site" description="N-linked (GlcNAc...) asparagine" evidence="3">
    <location>
        <position position="447"/>
    </location>
</feature>
<feature type="disulfide bond" evidence="8 14">
    <location>
        <begin position="145"/>
        <end position="183"/>
    </location>
</feature>
<feature type="disulfide bond" evidence="8 14">
    <location>
        <begin position="156"/>
        <end position="196"/>
    </location>
</feature>
<feature type="disulfide bond" evidence="8 14">
    <location>
        <begin position="172"/>
        <end position="338"/>
    </location>
</feature>
<feature type="disulfide bond" evidence="8 14 15">
    <location>
        <begin position="372"/>
        <end position="626"/>
    </location>
</feature>
<feature type="disulfide bond" evidence="8 14 15">
    <location>
        <begin position="649"/>
        <end position="724"/>
    </location>
</feature>
<feature type="disulfide bond" evidence="8 14 15">
    <location>
        <begin position="653"/>
        <end position="726"/>
    </location>
</feature>
<feature type="disulfide bond" evidence="8 14 15">
    <location>
        <begin position="660"/>
        <end position="713"/>
    </location>
</feature>
<feature type="disulfide bond" evidence="8 14 15">
    <location>
        <begin position="681"/>
        <end position="702"/>
    </location>
</feature>
<feature type="disulfide bond" evidence="8 14 15">
    <location>
        <begin position="737"/>
        <end position="740"/>
    </location>
</feature>
<feature type="mutagenesis site" description="No effect on the biosynthesis of the secreted form." evidence="6">
    <original>L</original>
    <variation>D</variation>
    <location>
        <position position="29"/>
    </location>
</feature>
<feature type="mutagenesis site" description="No effect on the biosynthesis of the secreted form." evidence="6">
    <original>L</original>
    <variation>D</variation>
    <location>
        <position position="30"/>
    </location>
</feature>
<feature type="mutagenesis site" description="No effect on the biosynthesis of the secreted form." evidence="6">
    <original>H</original>
    <variation>A</variation>
    <location>
        <position position="31"/>
    </location>
</feature>
<feature type="mutagenesis site" description="Decreased catalytic activity." evidence="8">
    <original>E</original>
    <variation>A</variation>
    <location>
        <position position="280"/>
    </location>
</feature>
<feature type="mutagenesis site" description="Decreased catalytic activity." evidence="8">
    <original>E</original>
    <variation>A</variation>
    <location>
        <position position="287"/>
    </location>
</feature>
<feature type="mutagenesis site" description="Loss of catalytic activity." evidence="8">
    <original>E</original>
    <variation>A</variation>
    <location>
        <position position="297"/>
    </location>
</feature>
<feature type="mutagenesis site" description="Decreased catalytic activity." evidence="8">
    <original>E</original>
    <variation>A</variation>
    <location>
        <position position="429"/>
    </location>
</feature>
<feature type="mutagenesis site" description="Loss of catalytic activity." evidence="8">
    <original>E</original>
    <variation>A</variation>
    <location>
        <position position="520"/>
    </location>
</feature>
<feature type="mutagenesis site" description="Loss of catalytic activity." evidence="8">
    <original>E</original>
    <variation>A</variation>
    <location>
        <position position="526"/>
    </location>
</feature>
<feature type="helix" evidence="17">
    <location>
        <begin position="13"/>
        <end position="37"/>
    </location>
</feature>
<feature type="helix" evidence="16">
    <location>
        <begin position="129"/>
        <end position="139"/>
    </location>
</feature>
<feature type="helix" evidence="16">
    <location>
        <begin position="156"/>
        <end position="166"/>
    </location>
</feature>
<feature type="helix" evidence="16">
    <location>
        <begin position="172"/>
        <end position="175"/>
    </location>
</feature>
<feature type="helix" evidence="16">
    <location>
        <begin position="182"/>
        <end position="191"/>
    </location>
</feature>
<feature type="helix" evidence="18">
    <location>
        <begin position="223"/>
        <end position="229"/>
    </location>
</feature>
<feature type="helix" evidence="18">
    <location>
        <begin position="233"/>
        <end position="235"/>
    </location>
</feature>
<feature type="helix" evidence="18">
    <location>
        <begin position="236"/>
        <end position="259"/>
    </location>
</feature>
<feature type="strand" evidence="18">
    <location>
        <begin position="269"/>
        <end position="273"/>
    </location>
</feature>
<feature type="helix" evidence="18">
    <location>
        <begin position="275"/>
        <end position="277"/>
    </location>
</feature>
<feature type="helix" evidence="18">
    <location>
        <begin position="279"/>
        <end position="281"/>
    </location>
</feature>
<feature type="helix" evidence="18">
    <location>
        <begin position="285"/>
        <end position="288"/>
    </location>
</feature>
<feature type="helix" evidence="18">
    <location>
        <begin position="290"/>
        <end position="292"/>
    </location>
</feature>
<feature type="helix" evidence="18">
    <location>
        <begin position="295"/>
        <end position="310"/>
    </location>
</feature>
<feature type="strand" evidence="18">
    <location>
        <begin position="314"/>
        <end position="318"/>
    </location>
</feature>
<feature type="helix" evidence="18">
    <location>
        <begin position="321"/>
        <end position="328"/>
    </location>
</feature>
<feature type="strand" evidence="18">
    <location>
        <begin position="348"/>
        <end position="352"/>
    </location>
</feature>
<feature type="helix" evidence="18">
    <location>
        <begin position="353"/>
        <end position="363"/>
    </location>
</feature>
<feature type="helix" evidence="18">
    <location>
        <begin position="365"/>
        <end position="373"/>
    </location>
</feature>
<feature type="strand" evidence="18">
    <location>
        <begin position="374"/>
        <end position="377"/>
    </location>
</feature>
<feature type="helix" evidence="18">
    <location>
        <begin position="384"/>
        <end position="387"/>
    </location>
</feature>
<feature type="helix" evidence="18">
    <location>
        <begin position="389"/>
        <end position="394"/>
    </location>
</feature>
<feature type="helix" evidence="18">
    <location>
        <begin position="408"/>
        <end position="410"/>
    </location>
</feature>
<feature type="strand" evidence="18">
    <location>
        <begin position="411"/>
        <end position="416"/>
    </location>
</feature>
<feature type="strand" evidence="18">
    <location>
        <begin position="421"/>
        <end position="423"/>
    </location>
</feature>
<feature type="helix" evidence="16">
    <location>
        <begin position="434"/>
        <end position="440"/>
    </location>
</feature>
<feature type="strand" evidence="18">
    <location>
        <begin position="445"/>
        <end position="452"/>
    </location>
</feature>
<feature type="helix" evidence="18">
    <location>
        <begin position="456"/>
        <end position="459"/>
    </location>
</feature>
<feature type="helix" evidence="18">
    <location>
        <begin position="463"/>
        <end position="472"/>
    </location>
</feature>
<feature type="strand" evidence="18">
    <location>
        <begin position="473"/>
        <end position="477"/>
    </location>
</feature>
<feature type="helix" evidence="18">
    <location>
        <begin position="499"/>
        <end position="507"/>
    </location>
</feature>
<feature type="strand" evidence="18">
    <location>
        <begin position="509"/>
        <end position="513"/>
    </location>
</feature>
<feature type="strand" evidence="18">
    <location>
        <begin position="520"/>
        <end position="522"/>
    </location>
</feature>
<feature type="helix" evidence="18">
    <location>
        <begin position="523"/>
        <end position="529"/>
    </location>
</feature>
<feature type="strand" evidence="18">
    <location>
        <begin position="533"/>
        <end position="544"/>
    </location>
</feature>
<feature type="turn" evidence="18">
    <location>
        <begin position="545"/>
        <end position="547"/>
    </location>
</feature>
<feature type="helix" evidence="18">
    <location>
        <begin position="549"/>
        <end position="551"/>
    </location>
</feature>
<feature type="strand" evidence="18">
    <location>
        <begin position="560"/>
        <end position="563"/>
    </location>
</feature>
<feature type="helix" evidence="18">
    <location>
        <begin position="565"/>
        <end position="570"/>
    </location>
</feature>
<feature type="turn" evidence="18">
    <location>
        <begin position="573"/>
        <end position="575"/>
    </location>
</feature>
<feature type="strand" evidence="18">
    <location>
        <begin position="576"/>
        <end position="579"/>
    </location>
</feature>
<feature type="helix" evidence="18">
    <location>
        <begin position="584"/>
        <end position="596"/>
    </location>
</feature>
<feature type="helix" evidence="18">
    <location>
        <begin position="605"/>
        <end position="607"/>
    </location>
</feature>
<feature type="helix" evidence="18">
    <location>
        <begin position="609"/>
        <end position="622"/>
    </location>
</feature>
<feature type="strand" evidence="16">
    <location>
        <begin position="625"/>
        <end position="629"/>
    </location>
</feature>
<feature type="helix" evidence="18">
    <location>
        <begin position="635"/>
        <end position="637"/>
    </location>
</feature>
<feature type="strand" evidence="18">
    <location>
        <begin position="639"/>
        <end position="643"/>
    </location>
</feature>
<feature type="helix" evidence="18">
    <location>
        <begin position="649"/>
        <end position="655"/>
    </location>
</feature>
<feature type="helix" evidence="18">
    <location>
        <begin position="662"/>
        <end position="668"/>
    </location>
</feature>
<feature type="helix" evidence="18">
    <location>
        <begin position="671"/>
        <end position="675"/>
    </location>
</feature>
<feature type="turn" evidence="18">
    <location>
        <begin position="676"/>
        <end position="678"/>
    </location>
</feature>
<feature type="strand" evidence="18">
    <location>
        <begin position="682"/>
        <end position="687"/>
    </location>
</feature>
<feature type="strand" evidence="18">
    <location>
        <begin position="693"/>
        <end position="696"/>
    </location>
</feature>
<feature type="turn" evidence="18">
    <location>
        <begin position="697"/>
        <end position="700"/>
    </location>
</feature>
<feature type="strand" evidence="18">
    <location>
        <begin position="701"/>
        <end position="706"/>
    </location>
</feature>
<feature type="helix" evidence="18">
    <location>
        <begin position="708"/>
        <end position="710"/>
    </location>
</feature>
<feature type="strand" evidence="18">
    <location>
        <begin position="718"/>
        <end position="727"/>
    </location>
</feature>
<feature type="helix" evidence="16">
    <location>
        <begin position="738"/>
        <end position="740"/>
    </location>
</feature>
<accession>Q09328</accession>
<accession>D3DP70</accession>
<proteinExistence type="evidence at protein level"/>
<dbReference type="EC" id="2.4.1.155" evidence="4 8"/>
<dbReference type="EMBL" id="D17716">
    <property type="protein sequence ID" value="BAA04570.1"/>
    <property type="molecule type" value="mRNA"/>
</dbReference>
<dbReference type="EMBL" id="AF113921">
    <property type="protein sequence ID" value="AAD22449.1"/>
    <property type="molecule type" value="mRNA"/>
</dbReference>
<dbReference type="EMBL" id="CH471058">
    <property type="protein sequence ID" value="EAX11657.1"/>
    <property type="molecule type" value="Genomic_DNA"/>
</dbReference>
<dbReference type="EMBL" id="CH471058">
    <property type="protein sequence ID" value="EAX11658.1"/>
    <property type="molecule type" value="Genomic_DNA"/>
</dbReference>
<dbReference type="CCDS" id="CCDS2171.1"/>
<dbReference type="PIR" id="JC2074">
    <property type="entry name" value="JC2074"/>
</dbReference>
<dbReference type="RefSeq" id="NP_001358386.1">
    <property type="nucleotide sequence ID" value="NM_001371457.1"/>
</dbReference>
<dbReference type="RefSeq" id="NP_002401.1">
    <property type="nucleotide sequence ID" value="NM_002410.5"/>
</dbReference>
<dbReference type="RefSeq" id="XP_005263725.1">
    <property type="nucleotide sequence ID" value="XM_005263668.4"/>
</dbReference>
<dbReference type="RefSeq" id="XP_005263726.1">
    <property type="nucleotide sequence ID" value="XM_005263669.6"/>
</dbReference>
<dbReference type="RefSeq" id="XP_005263727.1">
    <property type="nucleotide sequence ID" value="XM_005263670.3"/>
</dbReference>
<dbReference type="RefSeq" id="XP_006712597.1">
    <property type="nucleotide sequence ID" value="XM_006712534.4"/>
</dbReference>
<dbReference type="RefSeq" id="XP_011509501.1">
    <property type="nucleotide sequence ID" value="XM_011511199.3"/>
</dbReference>
<dbReference type="RefSeq" id="XP_011509502.1">
    <property type="nucleotide sequence ID" value="XM_011511200.1"/>
</dbReference>
<dbReference type="RefSeq" id="XP_011509503.1">
    <property type="nucleotide sequence ID" value="XM_011511201.3"/>
</dbReference>
<dbReference type="RefSeq" id="XP_011509504.1">
    <property type="nucleotide sequence ID" value="XM_011511202.3"/>
</dbReference>
<dbReference type="RefSeq" id="XP_016859636.1">
    <property type="nucleotide sequence ID" value="XM_017004147.3"/>
</dbReference>
<dbReference type="RefSeq" id="XP_016859637.1">
    <property type="nucleotide sequence ID" value="XM_017004148.2"/>
</dbReference>
<dbReference type="RefSeq" id="XP_047300350.1">
    <property type="nucleotide sequence ID" value="XM_047444394.1"/>
</dbReference>
<dbReference type="RefSeq" id="XP_047300351.1">
    <property type="nucleotide sequence ID" value="XM_047444395.1"/>
</dbReference>
<dbReference type="RefSeq" id="XP_047300352.1">
    <property type="nucleotide sequence ID" value="XM_047444396.1"/>
</dbReference>
<dbReference type="RefSeq" id="XP_047300353.1">
    <property type="nucleotide sequence ID" value="XM_047444397.1"/>
</dbReference>
<dbReference type="RefSeq" id="XP_047300354.1">
    <property type="nucleotide sequence ID" value="XM_047444398.1"/>
</dbReference>
<dbReference type="RefSeq" id="XP_047300355.1">
    <property type="nucleotide sequence ID" value="XM_047444399.1"/>
</dbReference>
<dbReference type="RefSeq" id="XP_047300356.1">
    <property type="nucleotide sequence ID" value="XM_047444400.1"/>
</dbReference>
<dbReference type="RefSeq" id="XP_047300357.1">
    <property type="nucleotide sequence ID" value="XM_047444401.1"/>
</dbReference>
<dbReference type="RefSeq" id="XP_047300358.1">
    <property type="nucleotide sequence ID" value="XM_047444402.1"/>
</dbReference>
<dbReference type="RefSeq" id="XP_047300359.1">
    <property type="nucleotide sequence ID" value="XM_047444403.1"/>
</dbReference>
<dbReference type="RefSeq" id="XP_047300360.1">
    <property type="nucleotide sequence ID" value="XM_047444404.1"/>
</dbReference>
<dbReference type="RefSeq" id="XP_047300361.1">
    <property type="nucleotide sequence ID" value="XM_047444405.1"/>
</dbReference>
<dbReference type="RefSeq" id="XP_054198083.1">
    <property type="nucleotide sequence ID" value="XM_054342108.1"/>
</dbReference>
<dbReference type="RefSeq" id="XP_054198084.1">
    <property type="nucleotide sequence ID" value="XM_054342109.1"/>
</dbReference>
<dbReference type="RefSeq" id="XP_054198085.1">
    <property type="nucleotide sequence ID" value="XM_054342110.1"/>
</dbReference>
<dbReference type="RefSeq" id="XP_054198086.1">
    <property type="nucleotide sequence ID" value="XM_054342111.1"/>
</dbReference>
<dbReference type="RefSeq" id="XP_054198087.1">
    <property type="nucleotide sequence ID" value="XM_054342112.1"/>
</dbReference>
<dbReference type="RefSeq" id="XP_054198088.1">
    <property type="nucleotide sequence ID" value="XM_054342113.1"/>
</dbReference>
<dbReference type="RefSeq" id="XP_054198089.1">
    <property type="nucleotide sequence ID" value="XM_054342114.1"/>
</dbReference>
<dbReference type="RefSeq" id="XP_054198090.1">
    <property type="nucleotide sequence ID" value="XM_054342115.1"/>
</dbReference>
<dbReference type="RefSeq" id="XP_054198091.1">
    <property type="nucleotide sequence ID" value="XM_054342116.1"/>
</dbReference>
<dbReference type="RefSeq" id="XP_054198092.1">
    <property type="nucleotide sequence ID" value="XM_054342117.1"/>
</dbReference>
<dbReference type="RefSeq" id="XP_054198093.1">
    <property type="nucleotide sequence ID" value="XM_054342118.1"/>
</dbReference>
<dbReference type="RefSeq" id="XP_054198094.1">
    <property type="nucleotide sequence ID" value="XM_054342119.1"/>
</dbReference>
<dbReference type="RefSeq" id="XP_054198095.1">
    <property type="nucleotide sequence ID" value="XM_054342120.1"/>
</dbReference>
<dbReference type="RefSeq" id="XP_054198096.1">
    <property type="nucleotide sequence ID" value="XM_054342121.1"/>
</dbReference>
<dbReference type="RefSeq" id="XP_054198097.1">
    <property type="nucleotide sequence ID" value="XM_054342122.1"/>
</dbReference>
<dbReference type="PDB" id="5ZIB">
    <property type="method" value="X-ray"/>
    <property type="resolution" value="1.90 A"/>
    <property type="chains" value="A=121-741"/>
</dbReference>
<dbReference type="PDB" id="5ZIC">
    <property type="method" value="X-ray"/>
    <property type="resolution" value="2.10 A"/>
    <property type="chains" value="A/B=213-329, A/B=345-741"/>
</dbReference>
<dbReference type="PDB" id="6YJQ">
    <property type="method" value="X-ray"/>
    <property type="resolution" value="1.90 A"/>
    <property type="chains" value="AAA/BBB=214-328, AAA/BBB=346-741"/>
</dbReference>
<dbReference type="PDB" id="6YJR">
    <property type="method" value="X-ray"/>
    <property type="resolution" value="2.20 A"/>
    <property type="chains" value="AAA/BBB=214-741"/>
</dbReference>
<dbReference type="PDB" id="6YJS">
    <property type="method" value="X-ray"/>
    <property type="resolution" value="1.60 A"/>
    <property type="chains" value="AAA/BBB=214-741"/>
</dbReference>
<dbReference type="PDB" id="6YJT">
    <property type="method" value="X-ray"/>
    <property type="resolution" value="1.70 A"/>
    <property type="chains" value="AAA/BBB=214-741"/>
</dbReference>
<dbReference type="PDB" id="6YJU">
    <property type="method" value="X-ray"/>
    <property type="resolution" value="1.96 A"/>
    <property type="chains" value="AAA/BBB=214-741"/>
</dbReference>
<dbReference type="PDB" id="6YJV">
    <property type="method" value="X-ray"/>
    <property type="resolution" value="1.70 A"/>
    <property type="chains" value="AAA/BBB=214-741"/>
</dbReference>
<dbReference type="PDB" id="7YYI">
    <property type="method" value="NMR"/>
    <property type="chains" value="A=13-37"/>
</dbReference>
<dbReference type="PDB" id="7Z07">
    <property type="method" value="NMR"/>
    <property type="chains" value="A=13-37"/>
</dbReference>
<dbReference type="PDB" id="7Z08">
    <property type="method" value="NMR"/>
    <property type="chains" value="A=13-37"/>
</dbReference>
<dbReference type="PDB" id="7Z0B">
    <property type="method" value="NMR"/>
    <property type="chains" value="A=13-37"/>
</dbReference>
<dbReference type="PDB" id="8CE3">
    <property type="method" value="X-ray"/>
    <property type="resolution" value="1.89 A"/>
    <property type="chains" value="A/B=214-741"/>
</dbReference>
<dbReference type="PDB" id="9F5H">
    <property type="method" value="X-ray"/>
    <property type="resolution" value="1.97 A"/>
    <property type="chains" value="A/B=214-328, A/B=346-741"/>
</dbReference>
<dbReference type="PDBsum" id="5ZIB"/>
<dbReference type="PDBsum" id="5ZIC"/>
<dbReference type="PDBsum" id="6YJQ"/>
<dbReference type="PDBsum" id="6YJR"/>
<dbReference type="PDBsum" id="6YJS"/>
<dbReference type="PDBsum" id="6YJT"/>
<dbReference type="PDBsum" id="6YJU"/>
<dbReference type="PDBsum" id="6YJV"/>
<dbReference type="PDBsum" id="7YYI"/>
<dbReference type="PDBsum" id="7Z07"/>
<dbReference type="PDBsum" id="7Z08"/>
<dbReference type="PDBsum" id="7Z0B"/>
<dbReference type="PDBsum" id="8CE3"/>
<dbReference type="PDBsum" id="9F5H"/>
<dbReference type="SMR" id="Q09328"/>
<dbReference type="BioGRID" id="110405">
    <property type="interactions" value="71"/>
</dbReference>
<dbReference type="CORUM" id="Q09328"/>
<dbReference type="FunCoup" id="Q09328">
    <property type="interactions" value="892"/>
</dbReference>
<dbReference type="IntAct" id="Q09328">
    <property type="interactions" value="49"/>
</dbReference>
<dbReference type="STRING" id="9606.ENSP00000281923"/>
<dbReference type="ChEMBL" id="CHEMBL1795131"/>
<dbReference type="CAZy" id="GT18">
    <property type="family name" value="Glycosyltransferase Family 18"/>
</dbReference>
<dbReference type="GlyCosmos" id="Q09328">
    <property type="glycosylation" value="7 sites, 1 glycan"/>
</dbReference>
<dbReference type="GlyGen" id="Q09328">
    <property type="glycosylation" value="11 sites, 3 N-linked glycans (2 sites), 3 O-linked glycans (4 sites)"/>
</dbReference>
<dbReference type="iPTMnet" id="Q09328"/>
<dbReference type="PhosphoSitePlus" id="Q09328"/>
<dbReference type="SwissPalm" id="Q09328"/>
<dbReference type="BioMuta" id="MGAT5"/>
<dbReference type="DMDM" id="1169980"/>
<dbReference type="jPOST" id="Q09328"/>
<dbReference type="MassIVE" id="Q09328"/>
<dbReference type="PaxDb" id="9606-ENSP00000386377"/>
<dbReference type="PeptideAtlas" id="Q09328"/>
<dbReference type="ProteomicsDB" id="58719"/>
<dbReference type="Antibodypedia" id="33554">
    <property type="antibodies" value="151 antibodies from 25 providers"/>
</dbReference>
<dbReference type="DNASU" id="4249"/>
<dbReference type="Ensembl" id="ENST00000281923.4">
    <property type="protein sequence ID" value="ENSP00000281923.2"/>
    <property type="gene ID" value="ENSG00000152127.9"/>
</dbReference>
<dbReference type="Ensembl" id="ENST00000409645.5">
    <property type="protein sequence ID" value="ENSP00000386377.1"/>
    <property type="gene ID" value="ENSG00000152127.9"/>
</dbReference>
<dbReference type="GeneID" id="4249"/>
<dbReference type="KEGG" id="hsa:4249"/>
<dbReference type="MANE-Select" id="ENST00000281923.4">
    <property type="protein sequence ID" value="ENSP00000281923.2"/>
    <property type="RefSeq nucleotide sequence ID" value="NM_002410.5"/>
    <property type="RefSeq protein sequence ID" value="NP_002401.1"/>
</dbReference>
<dbReference type="UCSC" id="uc002ttw.5">
    <property type="organism name" value="human"/>
</dbReference>
<dbReference type="AGR" id="HGNC:7049"/>
<dbReference type="CTD" id="4249"/>
<dbReference type="DisGeNET" id="4249"/>
<dbReference type="GeneCards" id="MGAT5"/>
<dbReference type="HGNC" id="HGNC:7049">
    <property type="gene designation" value="MGAT5"/>
</dbReference>
<dbReference type="HPA" id="ENSG00000152127">
    <property type="expression patterns" value="Low tissue specificity"/>
</dbReference>
<dbReference type="MIM" id="601774">
    <property type="type" value="gene"/>
</dbReference>
<dbReference type="neXtProt" id="NX_Q09328"/>
<dbReference type="OpenTargets" id="ENSG00000152127"/>
<dbReference type="PharmGKB" id="PA30784"/>
<dbReference type="VEuPathDB" id="HostDB:ENSG00000152127"/>
<dbReference type="eggNOG" id="ENOG502QTNG">
    <property type="taxonomic scope" value="Eukaryota"/>
</dbReference>
<dbReference type="GeneTree" id="ENSGT00940000153470"/>
<dbReference type="HOGENOM" id="CLU_016749_1_0_1"/>
<dbReference type="InParanoid" id="Q09328"/>
<dbReference type="OMA" id="HCESKLK"/>
<dbReference type="OrthoDB" id="2113294at2759"/>
<dbReference type="PAN-GO" id="Q09328">
    <property type="GO annotations" value="3 GO annotations based on evolutionary models"/>
</dbReference>
<dbReference type="PhylomeDB" id="Q09328"/>
<dbReference type="TreeFam" id="TF313714"/>
<dbReference type="BioCyc" id="MetaCyc:HS07793-MONOMER"/>
<dbReference type="BRENDA" id="2.4.1.155">
    <property type="organism ID" value="2681"/>
</dbReference>
<dbReference type="PathwayCommons" id="Q09328"/>
<dbReference type="Reactome" id="R-HSA-9694548">
    <property type="pathway name" value="Maturation of spike protein"/>
</dbReference>
<dbReference type="Reactome" id="R-HSA-975577">
    <property type="pathway name" value="N-Glycan antennae elongation"/>
</dbReference>
<dbReference type="SignaLink" id="Q09328"/>
<dbReference type="UniPathway" id="UPA00378"/>
<dbReference type="BioGRID-ORCS" id="4249">
    <property type="hits" value="9 hits in 1159 CRISPR screens"/>
</dbReference>
<dbReference type="ChiTaRS" id="MGAT5">
    <property type="organism name" value="human"/>
</dbReference>
<dbReference type="GeneWiki" id="MGAT5"/>
<dbReference type="GenomeRNAi" id="4249"/>
<dbReference type="Pharos" id="Q09328">
    <property type="development level" value="Tbio"/>
</dbReference>
<dbReference type="PRO" id="PR:Q09328"/>
<dbReference type="Proteomes" id="UP000005640">
    <property type="component" value="Chromosome 2"/>
</dbReference>
<dbReference type="RNAct" id="Q09328">
    <property type="molecule type" value="protein"/>
</dbReference>
<dbReference type="Bgee" id="ENSG00000152127">
    <property type="expression patterns" value="Expressed in renal glomerulus and 190 other cell types or tissues"/>
</dbReference>
<dbReference type="GO" id="GO:0070062">
    <property type="term" value="C:extracellular exosome"/>
    <property type="evidence" value="ECO:0007005"/>
    <property type="project" value="UniProtKB"/>
</dbReference>
<dbReference type="GO" id="GO:0005794">
    <property type="term" value="C:Golgi apparatus"/>
    <property type="evidence" value="ECO:0000318"/>
    <property type="project" value="GO_Central"/>
</dbReference>
<dbReference type="GO" id="GO:0000139">
    <property type="term" value="C:Golgi membrane"/>
    <property type="evidence" value="ECO:0000250"/>
    <property type="project" value="UniProtKB"/>
</dbReference>
<dbReference type="GO" id="GO:0016020">
    <property type="term" value="C:membrane"/>
    <property type="evidence" value="ECO:0000314"/>
    <property type="project" value="UniProtKB"/>
</dbReference>
<dbReference type="GO" id="GO:0030144">
    <property type="term" value="F:alpha-1,6-mannosylglycoprotein 6-beta-N-acetylglucosaminyltransferase activity"/>
    <property type="evidence" value="ECO:0000314"/>
    <property type="project" value="UniProtKB"/>
</dbReference>
<dbReference type="GO" id="GO:0030145">
    <property type="term" value="F:manganese ion binding"/>
    <property type="evidence" value="ECO:0000314"/>
    <property type="project" value="UniProtKB"/>
</dbReference>
<dbReference type="GO" id="GO:0004864">
    <property type="term" value="F:protein phosphatase inhibitor activity"/>
    <property type="evidence" value="ECO:0000314"/>
    <property type="project" value="ARUK-UCL"/>
</dbReference>
<dbReference type="GO" id="GO:0030335">
    <property type="term" value="P:positive regulation of cell migration"/>
    <property type="evidence" value="ECO:0000314"/>
    <property type="project" value="ARUK-UCL"/>
</dbReference>
<dbReference type="GO" id="GO:1904894">
    <property type="term" value="P:positive regulation of receptor signaling pathway via STAT"/>
    <property type="evidence" value="ECO:0000314"/>
    <property type="project" value="ARUK-UCL"/>
</dbReference>
<dbReference type="GO" id="GO:0006487">
    <property type="term" value="P:protein N-linked glycosylation"/>
    <property type="evidence" value="ECO:0000314"/>
    <property type="project" value="ARUK-UCL"/>
</dbReference>
<dbReference type="GO" id="GO:0018279">
    <property type="term" value="P:protein N-linked glycosylation via asparagine"/>
    <property type="evidence" value="ECO:0000314"/>
    <property type="project" value="UniProtKB"/>
</dbReference>
<dbReference type="GO" id="GO:0019082">
    <property type="term" value="P:viral protein processing"/>
    <property type="evidence" value="ECO:0000304"/>
    <property type="project" value="Reactome"/>
</dbReference>
<dbReference type="InterPro" id="IPR026116">
    <property type="entry name" value="GT18_cat"/>
</dbReference>
<dbReference type="InterPro" id="IPR052105">
    <property type="entry name" value="MGAT5_Glycosyltransferase"/>
</dbReference>
<dbReference type="InterPro" id="IPR027833">
    <property type="entry name" value="MGT5A-like_N"/>
</dbReference>
<dbReference type="PANTHER" id="PTHR15075:SF5">
    <property type="entry name" value="ALPHA-1,6-MANNOSYLGLYCOPROTEIN 6-BETA-N-ACETYLGLUCOSAMINYLTRANSFERASE A"/>
    <property type="match status" value="1"/>
</dbReference>
<dbReference type="PANTHER" id="PTHR15075">
    <property type="entry name" value="ALPHA-MANNOSIDE BETA-1,6-N-ACETYLGLUCOSAMINYLTRANSFERASE"/>
    <property type="match status" value="1"/>
</dbReference>
<dbReference type="Pfam" id="PF15024">
    <property type="entry name" value="Glyco_transf_18"/>
    <property type="match status" value="1"/>
</dbReference>
<dbReference type="Pfam" id="PF15027">
    <property type="entry name" value="MGT5A_N"/>
    <property type="match status" value="1"/>
</dbReference>
<protein>
    <recommendedName>
        <fullName>Alpha-1,6-mannosylglycoprotein 6-beta-N-acetylglucosaminyltransferase A</fullName>
        <ecNumber evidence="4 8">2.4.1.155</ecNumber>
    </recommendedName>
    <alternativeName>
        <fullName evidence="9">Alpha-mannoside beta-1,6-N-acetylglucosaminyltransferase V</fullName>
    </alternativeName>
    <alternativeName>
        <fullName evidence="9">GlcNAc-T V</fullName>
        <shortName>GNT-V</shortName>
    </alternativeName>
    <alternativeName>
        <fullName>Mannoside acetylglucosaminyltransferase 5</fullName>
    </alternativeName>
    <alternativeName>
        <fullName>N-acetylglucosaminyl-transferase V</fullName>
    </alternativeName>
    <component>
        <recommendedName>
            <fullName evidence="11">Secreted alpha-1,6-mannosylglycoprotein 6-beta-N-acetylglucosaminyltransferase A</fullName>
        </recommendedName>
        <alternativeName>
            <fullName evidence="10">Secreted beta-1,6-N-acetylglucosaminyltransferase V</fullName>
            <shortName evidence="10">Secreted GNT-V</shortName>
        </alternativeName>
    </component>
</protein>
<evidence type="ECO:0000250" key="1">
    <source>
        <dbReference type="UniProtKB" id="P97259"/>
    </source>
</evidence>
<evidence type="ECO:0000250" key="2">
    <source>
        <dbReference type="UniProtKB" id="Q8R4G6"/>
    </source>
</evidence>
<evidence type="ECO:0000255" key="3"/>
<evidence type="ECO:0000269" key="4">
    <source>
    </source>
</evidence>
<evidence type="ECO:0000269" key="5">
    <source>
    </source>
</evidence>
<evidence type="ECO:0000269" key="6">
    <source>
    </source>
</evidence>
<evidence type="ECO:0000269" key="7">
    <source>
    </source>
</evidence>
<evidence type="ECO:0000269" key="8">
    <source>
    </source>
</evidence>
<evidence type="ECO:0000303" key="9">
    <source>
    </source>
</evidence>
<evidence type="ECO:0000303" key="10">
    <source>
    </source>
</evidence>
<evidence type="ECO:0000305" key="11"/>
<evidence type="ECO:0000305" key="12">
    <source>
    </source>
</evidence>
<evidence type="ECO:0000305" key="13">
    <source>
    </source>
</evidence>
<evidence type="ECO:0007744" key="14">
    <source>
        <dbReference type="PDB" id="5ZIB"/>
    </source>
</evidence>
<evidence type="ECO:0007744" key="15">
    <source>
        <dbReference type="PDB" id="5ZIC"/>
    </source>
</evidence>
<evidence type="ECO:0007829" key="16">
    <source>
        <dbReference type="PDB" id="5ZIB"/>
    </source>
</evidence>
<evidence type="ECO:0007829" key="17">
    <source>
        <dbReference type="PDB" id="7YYI"/>
    </source>
</evidence>
<evidence type="ECO:0007829" key="18">
    <source>
        <dbReference type="PDB" id="8CE3"/>
    </source>
</evidence>
<comment type="function">
    <text evidence="2 4 7 8">Catalyzes the addition of N-acetylglucosamine (GlcNAc) in beta 1-6 linkage to the alpha-linked mannose of biantennary N-linked oligosaccharides (PubMed:10395745, PubMed:30140003). Catalyzes an important step in the biosynthesis of branched, complex-type N-glycans, such as those found on EGFR, TGFR (TGF-beta receptor) and CDH2 (PubMed:10395745, PubMed:22614033, PubMed:30140003). Via its role in the biosynthesis of complex N-glycans, plays an important role in the activation of cellular signaling pathways, reorganization of the actin cytoskeleton, cell-cell adhesion and cell migration. MGAT5-dependent EGFR N-glycosylation enhances the interaction between EGFR and LGALS3 and thereby prevents rapid EGFR endocytosis and prolongs EGFR signaling. Required for efficient interaction between TGFB1 and its receptor. Enhances activation of intracellular signaling pathways by several types of growth factors, including FGF2, PDGF, IGF, TGFB1 and EGF. MGAT5-dependent CDH2 N-glycosylation inhibits CDH2-mediated homotypic cell-cell adhesion and contributes to the regulation of downstream signaling pathways. Promotes cell migration. Contributes to the regulation of the inflammatory response. MGAT5-dependent TCR N-glycosylation enhances the interaction between TCR and LGALS3, limits agonist-induced TCR clustering, and thereby dampens TCR-mediated responses to antigens. Required for normal leukocyte evasation and accumulation at sites of inflammation (By similarity). Inhibits attachment of monocytes to the vascular endothelium and subsequent monocyte diapedesis (PubMed:22614033).</text>
</comment>
<comment type="function">
    <molecule>Secreted alpha-1,6-mannosylglycoprotein 6-beta-N-acetylglucosaminyltransferase A</molecule>
    <text evidence="5">Promotes proliferation of umbilical vein endothelial cells and angiogenesis, at least in part by promoting the release of the growth factor FGF2 from the extracellular matrix.</text>
</comment>
<comment type="catalytic activity">
    <reaction evidence="4 6 8">
        <text>N(4)-{beta-D-GlcNAc-(1-&gt;2)-[beta-D-GlcNAc-(1-&gt;4)]-alpha-D-Man-(1-&gt;3)-[beta-D-GlcNAc-(1-&gt;2)-alpha-D-Man-(1-&gt;6)]-beta-D-Man-(1-&gt;4)-beta-D-GlcNAc-(1-&gt;4)-beta-D-GlcNAc}-L-asparaginyl-[protein] + UDP-N-acetyl-alpha-D-glucosamine = N(4)-{beta-D-GlcNAc-(1-&gt;2)-[beta-D-GlcNAc-(1-&gt;4)]-alpha-D-Man-(1-&gt;3)-[beta-D-GlcNAc-(1-&gt;2)-[beta-D-GlcNAc-(1-&gt;6)]-alpha-D-Man-(1-&gt;6)]-beta-D-Man-(1-&gt;4)-beta-D-GlcNAc-(1-&gt;4)-beta-D-GlcNAc}-L-asparaginyl-[protein] + UDP + H(+)</text>
        <dbReference type="Rhea" id="RHEA:16921"/>
        <dbReference type="Rhea" id="RHEA-COMP:14374"/>
        <dbReference type="Rhea" id="RHEA-COMP:14377"/>
        <dbReference type="ChEBI" id="CHEBI:15378"/>
        <dbReference type="ChEBI" id="CHEBI:57705"/>
        <dbReference type="ChEBI" id="CHEBI:58223"/>
        <dbReference type="ChEBI" id="CHEBI:139507"/>
        <dbReference type="ChEBI" id="CHEBI:139510"/>
        <dbReference type="EC" id="2.4.1.155"/>
    </reaction>
</comment>
<comment type="activity regulation">
    <text evidence="4">Activity is increased by Mn(2+) and Mg(2+).</text>
</comment>
<comment type="biophysicochemical properties">
    <kinetics>
        <KM evidence="8">6.78 mM for GlcNAc</KM>
        <KM evidence="4">5.8 mM for GlcNAc</KM>
    </kinetics>
    <phDependence>
        <text evidence="4">Optimum pH is 6.5.</text>
    </phDependence>
    <temperatureDependence>
        <text evidence="4">Optimum temperature is 50 degrees Celsius.</text>
    </temperatureDependence>
</comment>
<comment type="pathway">
    <text evidence="4 6 8">Protein modification; protein glycosylation.</text>
</comment>
<comment type="subcellular location">
    <subcellularLocation>
        <location evidence="1">Golgi apparatus membrane</location>
        <topology evidence="6">Single-pass type II membrane protein</topology>
    </subcellularLocation>
</comment>
<comment type="subcellular location">
    <molecule>Secreted alpha-1,6-mannosylglycoprotein 6-beta-N-acetylglucosaminyltransferase A</molecule>
    <subcellularLocation>
        <location evidence="6">Secreted</location>
    </subcellularLocation>
</comment>
<comment type="induction">
    <text evidence="7">Induced by IFNG treatment in monocytes (in vitro).</text>
</comment>
<comment type="PTM">
    <text evidence="4 6 8">N-glycosylated.</text>
</comment>
<comment type="PTM">
    <text evidence="6">A secreted form is released from the membrane after cleavage by gamma-secretase.</text>
</comment>
<comment type="similarity">
    <text evidence="11">Belongs to the glycosyltransferase 18 family.</text>
</comment>
<comment type="online information" name="Functional Glycomics Gateway - GTase">
    <link uri="http://www.functionalglycomics.org/glycomics/molecule/jsp/glycoEnzyme/viewGlycoEnzyme.jsp?gbpId=gt_hum_533"/>
    <text>Alpha-1,6-mannosylglycoprotein 6-beta-N-acetylglucosaminyltransferaseV</text>
</comment>
<gene>
    <name type="primary">MGAT5</name>
    <name type="synonym">GGNT5</name>
</gene>
<organism>
    <name type="scientific">Homo sapiens</name>
    <name type="common">Human</name>
    <dbReference type="NCBI Taxonomy" id="9606"/>
    <lineage>
        <taxon>Eukaryota</taxon>
        <taxon>Metazoa</taxon>
        <taxon>Chordata</taxon>
        <taxon>Craniata</taxon>
        <taxon>Vertebrata</taxon>
        <taxon>Euteleostomi</taxon>
        <taxon>Mammalia</taxon>
        <taxon>Eutheria</taxon>
        <taxon>Euarchontoglires</taxon>
        <taxon>Primates</taxon>
        <taxon>Haplorrhini</taxon>
        <taxon>Catarrhini</taxon>
        <taxon>Hominidae</taxon>
        <taxon>Homo</taxon>
    </lineage>
</organism>
<keyword id="KW-0002">3D-structure</keyword>
<keyword id="KW-0903">Direct protein sequencing</keyword>
<keyword id="KW-1015">Disulfide bond</keyword>
<keyword id="KW-0325">Glycoprotein</keyword>
<keyword id="KW-0328">Glycosyltransferase</keyword>
<keyword id="KW-0333">Golgi apparatus</keyword>
<keyword id="KW-0472">Membrane</keyword>
<keyword id="KW-1267">Proteomics identification</keyword>
<keyword id="KW-1185">Reference proteome</keyword>
<keyword id="KW-0964">Secreted</keyword>
<keyword id="KW-0735">Signal-anchor</keyword>
<keyword id="KW-0808">Transferase</keyword>
<keyword id="KW-0812">Transmembrane</keyword>
<keyword id="KW-1133">Transmembrane helix</keyword>
<name>MGT5A_HUMAN</name>